<accession>B0KF35</accession>
<protein>
    <recommendedName>
        <fullName evidence="1">Oxygen-dependent coproporphyrinogen-III oxidase</fullName>
        <shortName evidence="1">CPO</shortName>
        <shortName evidence="1">Coprogen oxidase</shortName>
        <shortName evidence="1">Coproporphyrinogenase</shortName>
        <ecNumber evidence="1">1.3.3.3</ecNumber>
    </recommendedName>
</protein>
<proteinExistence type="inferred from homology"/>
<feature type="chain" id="PRO_1000079258" description="Oxygen-dependent coproporphyrinogen-III oxidase">
    <location>
        <begin position="1"/>
        <end position="303"/>
    </location>
</feature>
<feature type="region of interest" description="Important for dimerization" evidence="1">
    <location>
        <begin position="241"/>
        <end position="276"/>
    </location>
</feature>
<feature type="active site" description="Proton donor" evidence="1">
    <location>
        <position position="107"/>
    </location>
</feature>
<feature type="binding site" evidence="1">
    <location>
        <position position="93"/>
    </location>
    <ligand>
        <name>substrate</name>
    </ligand>
</feature>
<feature type="binding site" evidence="1">
    <location>
        <position position="97"/>
    </location>
    <ligand>
        <name>a divalent metal cation</name>
        <dbReference type="ChEBI" id="CHEBI:60240"/>
    </ligand>
</feature>
<feature type="binding site" evidence="1">
    <location>
        <position position="107"/>
    </location>
    <ligand>
        <name>a divalent metal cation</name>
        <dbReference type="ChEBI" id="CHEBI:60240"/>
    </ligand>
</feature>
<feature type="binding site" evidence="1">
    <location>
        <begin position="109"/>
        <end position="111"/>
    </location>
    <ligand>
        <name>substrate</name>
    </ligand>
</feature>
<feature type="binding site" evidence="1">
    <location>
        <position position="146"/>
    </location>
    <ligand>
        <name>a divalent metal cation</name>
        <dbReference type="ChEBI" id="CHEBI:60240"/>
    </ligand>
</feature>
<feature type="binding site" evidence="1">
    <location>
        <position position="176"/>
    </location>
    <ligand>
        <name>a divalent metal cation</name>
        <dbReference type="ChEBI" id="CHEBI:60240"/>
    </ligand>
</feature>
<feature type="binding site" evidence="1">
    <location>
        <begin position="259"/>
        <end position="261"/>
    </location>
    <ligand>
        <name>substrate</name>
    </ligand>
</feature>
<feature type="site" description="Important for dimerization" evidence="1">
    <location>
        <position position="176"/>
    </location>
</feature>
<keyword id="KW-0963">Cytoplasm</keyword>
<keyword id="KW-0350">Heme biosynthesis</keyword>
<keyword id="KW-0479">Metal-binding</keyword>
<keyword id="KW-0560">Oxidoreductase</keyword>
<keyword id="KW-0627">Porphyrin biosynthesis</keyword>
<comment type="function">
    <text evidence="1">Involved in the heme biosynthesis. Catalyzes the aerobic oxidative decarboxylation of propionate groups of rings A and B of coproporphyrinogen-III to yield the vinyl groups in protoporphyrinogen-IX.</text>
</comment>
<comment type="catalytic activity">
    <reaction evidence="1">
        <text>coproporphyrinogen III + O2 + 2 H(+) = protoporphyrinogen IX + 2 CO2 + 2 H2O</text>
        <dbReference type="Rhea" id="RHEA:18257"/>
        <dbReference type="ChEBI" id="CHEBI:15377"/>
        <dbReference type="ChEBI" id="CHEBI:15378"/>
        <dbReference type="ChEBI" id="CHEBI:15379"/>
        <dbReference type="ChEBI" id="CHEBI:16526"/>
        <dbReference type="ChEBI" id="CHEBI:57307"/>
        <dbReference type="ChEBI" id="CHEBI:57309"/>
        <dbReference type="EC" id="1.3.3.3"/>
    </reaction>
</comment>
<comment type="cofactor">
    <cofactor evidence="1">
        <name>a divalent metal cation</name>
        <dbReference type="ChEBI" id="CHEBI:60240"/>
    </cofactor>
</comment>
<comment type="pathway">
    <text evidence="1">Porphyrin-containing compound metabolism; protoporphyrin-IX biosynthesis; protoporphyrinogen-IX from coproporphyrinogen-III (O2 route): step 1/1.</text>
</comment>
<comment type="subunit">
    <text evidence="1">Homodimer.</text>
</comment>
<comment type="subcellular location">
    <subcellularLocation>
        <location evidence="1">Cytoplasm</location>
    </subcellularLocation>
</comment>
<comment type="similarity">
    <text evidence="1">Belongs to the aerobic coproporphyrinogen-III oxidase family.</text>
</comment>
<sequence length="303" mass="34393">MTSRTEAVKAYLLDLQDRICSALETEDGGARFVEDAWVREAGGGGRTRVIGDGKVIEKGGVNFSHVFGAGLPPSASAHRPELAGRGFEALGVSLVIHPHNPHVPTSHANVRFFIAEKEGEEAVWWFGGGFDLTPYYGNEEDCIHWHRVAEQACAPFGADVYPRYKAWCDRYFHLKHRGEPRGIGGLFFDDLNEWDFDTCFAFIRAIGDAYVNAYLPIVQRRKDTPYTPQQREFQEYRRGRYVEFNLVYDRGTLFGLQSGGRTESILMSLPPQVRWGYDWKAAPGSEEARLTEYFLQDRDWLGQ</sequence>
<name>HEM6_PSEPG</name>
<gene>
    <name evidence="1" type="primary">hemF</name>
    <name type="ordered locus">PputGB1_0089</name>
</gene>
<evidence type="ECO:0000255" key="1">
    <source>
        <dbReference type="HAMAP-Rule" id="MF_00333"/>
    </source>
</evidence>
<dbReference type="EC" id="1.3.3.3" evidence="1"/>
<dbReference type="EMBL" id="CP000926">
    <property type="protein sequence ID" value="ABY96005.1"/>
    <property type="molecule type" value="Genomic_DNA"/>
</dbReference>
<dbReference type="RefSeq" id="WP_012269881.1">
    <property type="nucleotide sequence ID" value="NC_010322.1"/>
</dbReference>
<dbReference type="SMR" id="B0KF35"/>
<dbReference type="KEGG" id="ppg:PputGB1_0089"/>
<dbReference type="eggNOG" id="COG0408">
    <property type="taxonomic scope" value="Bacteria"/>
</dbReference>
<dbReference type="HOGENOM" id="CLU_026169_0_1_6"/>
<dbReference type="UniPathway" id="UPA00251">
    <property type="reaction ID" value="UER00322"/>
</dbReference>
<dbReference type="Proteomes" id="UP000002157">
    <property type="component" value="Chromosome"/>
</dbReference>
<dbReference type="GO" id="GO:0005737">
    <property type="term" value="C:cytoplasm"/>
    <property type="evidence" value="ECO:0007669"/>
    <property type="project" value="UniProtKB-SubCell"/>
</dbReference>
<dbReference type="GO" id="GO:0004109">
    <property type="term" value="F:coproporphyrinogen oxidase activity"/>
    <property type="evidence" value="ECO:0007669"/>
    <property type="project" value="UniProtKB-UniRule"/>
</dbReference>
<dbReference type="GO" id="GO:0046872">
    <property type="term" value="F:metal ion binding"/>
    <property type="evidence" value="ECO:0007669"/>
    <property type="project" value="UniProtKB-KW"/>
</dbReference>
<dbReference type="GO" id="GO:0042803">
    <property type="term" value="F:protein homodimerization activity"/>
    <property type="evidence" value="ECO:0000250"/>
    <property type="project" value="UniProtKB"/>
</dbReference>
<dbReference type="GO" id="GO:0006782">
    <property type="term" value="P:protoporphyrinogen IX biosynthetic process"/>
    <property type="evidence" value="ECO:0007669"/>
    <property type="project" value="UniProtKB-UniRule"/>
</dbReference>
<dbReference type="FunFam" id="3.40.1500.10:FF:000001">
    <property type="entry name" value="Oxygen-dependent coproporphyrinogen-III oxidase"/>
    <property type="match status" value="1"/>
</dbReference>
<dbReference type="Gene3D" id="3.40.1500.10">
    <property type="entry name" value="Coproporphyrinogen III oxidase, aerobic"/>
    <property type="match status" value="1"/>
</dbReference>
<dbReference type="HAMAP" id="MF_00333">
    <property type="entry name" value="Coprogen_oxidas"/>
    <property type="match status" value="1"/>
</dbReference>
<dbReference type="InterPro" id="IPR001260">
    <property type="entry name" value="Coprogen_oxidase_aer"/>
</dbReference>
<dbReference type="InterPro" id="IPR036406">
    <property type="entry name" value="Coprogen_oxidase_aer_sf"/>
</dbReference>
<dbReference type="InterPro" id="IPR018375">
    <property type="entry name" value="Coprogen_oxidase_CS"/>
</dbReference>
<dbReference type="NCBIfam" id="NF003727">
    <property type="entry name" value="PRK05330.1"/>
    <property type="match status" value="1"/>
</dbReference>
<dbReference type="PANTHER" id="PTHR10755">
    <property type="entry name" value="COPROPORPHYRINOGEN III OXIDASE, MITOCHONDRIAL"/>
    <property type="match status" value="1"/>
</dbReference>
<dbReference type="PANTHER" id="PTHR10755:SF0">
    <property type="entry name" value="OXYGEN-DEPENDENT COPROPORPHYRINOGEN-III OXIDASE, MITOCHONDRIAL"/>
    <property type="match status" value="1"/>
</dbReference>
<dbReference type="Pfam" id="PF01218">
    <property type="entry name" value="Coprogen_oxidas"/>
    <property type="match status" value="1"/>
</dbReference>
<dbReference type="PIRSF" id="PIRSF000166">
    <property type="entry name" value="Coproporphyri_ox"/>
    <property type="match status" value="1"/>
</dbReference>
<dbReference type="PRINTS" id="PR00073">
    <property type="entry name" value="COPRGNOXDASE"/>
</dbReference>
<dbReference type="SUPFAM" id="SSF102886">
    <property type="entry name" value="Coproporphyrinogen III oxidase"/>
    <property type="match status" value="1"/>
</dbReference>
<dbReference type="PROSITE" id="PS01021">
    <property type="entry name" value="COPROGEN_OXIDASE"/>
    <property type="match status" value="1"/>
</dbReference>
<reference key="1">
    <citation type="submission" date="2008-01" db="EMBL/GenBank/DDBJ databases">
        <title>Complete sequence of Pseudomonas putida GB-1.</title>
        <authorList>
            <consortium name="US DOE Joint Genome Institute"/>
            <person name="Copeland A."/>
            <person name="Lucas S."/>
            <person name="Lapidus A."/>
            <person name="Barry K."/>
            <person name="Glavina del Rio T."/>
            <person name="Dalin E."/>
            <person name="Tice H."/>
            <person name="Pitluck S."/>
            <person name="Bruce D."/>
            <person name="Goodwin L."/>
            <person name="Chertkov O."/>
            <person name="Brettin T."/>
            <person name="Detter J.C."/>
            <person name="Han C."/>
            <person name="Kuske C.R."/>
            <person name="Schmutz J."/>
            <person name="Larimer F."/>
            <person name="Land M."/>
            <person name="Hauser L."/>
            <person name="Kyrpides N."/>
            <person name="Kim E."/>
            <person name="McCarthy J.K."/>
            <person name="Richardson P."/>
        </authorList>
    </citation>
    <scope>NUCLEOTIDE SEQUENCE [LARGE SCALE GENOMIC DNA]</scope>
    <source>
        <strain>GB-1</strain>
    </source>
</reference>
<organism>
    <name type="scientific">Pseudomonas putida (strain GB-1)</name>
    <dbReference type="NCBI Taxonomy" id="76869"/>
    <lineage>
        <taxon>Bacteria</taxon>
        <taxon>Pseudomonadati</taxon>
        <taxon>Pseudomonadota</taxon>
        <taxon>Gammaproteobacteria</taxon>
        <taxon>Pseudomonadales</taxon>
        <taxon>Pseudomonadaceae</taxon>
        <taxon>Pseudomonas</taxon>
    </lineage>
</organism>